<sequence>MLISQSWLTRILQTSNPQWSVSAEEFDAGFVRVGFETEGYEAIPETTGPLVIGRVEKIEELTEFKKPIRYCDVNVGQANGTGELQHIICGARNFAEGDNVVIALPGTVLPGPFEISARKTYGKISEGMICSAMEVGLASQQNPGIMTISDADLASANLKVGDDARELLGLQDTIFDVNITPDRGYALSARGLARELASSFDLQFRDPAQDPAAAAMRNDLFAGLPGTDGEVQALKVDEDTKCSKFGMRKVTGIDPQAESPLWLQRELMLCGQRPVNPATDVTNYVMFLLGQPMHAFDADKVTGELHVRLAKKGEKLTTLDDVERTLDPEDVVISDESGIQSLAGVMGGSTSEISEATTNVLFEAAHWDQITVARTCRRHKLSSEASRRFERGTDAAIIEDALDFAVALLVNIAGGQVEEGRTLVGAVPEMPMITIHTSLPGKTAGKIYPDGTTISRLREVGCEVRETGSRDDNGAREIEVTPPTWRPDLTMPADLVEEVLRLEGLEDIPSIVPTAPAGRGYTPRQRMRRNVGQALAWAGYAEILPTPFIANDVFDVWDLPADDPRRLTVKVQNPLESDYACIGTTLLPSMIESLRRNVTRGQRDAALYGVEQVSVPKSAKPFSPMPSVKQRPGAEELQELLDSLPAQPLHVAVVATGNRQLQGTWGEPEAFTAADAIESARVVARAAGVEITVRNAEYLPWHPGRCAEILVGDKVVGHAGELHPQVCERAELPPRTVAMEMNLDALPLEETFPRPVLSAFPAVLQDIAVVVDEATPAQDVEDALRAGAGELLEEIRLFDVYHSESLGEGKRSLTFSLRFRAPDRTLTEEEASKSREAALQFATEKVGAQLRA</sequence>
<keyword id="KW-0030">Aminoacyl-tRNA synthetase</keyword>
<keyword id="KW-0067">ATP-binding</keyword>
<keyword id="KW-0963">Cytoplasm</keyword>
<keyword id="KW-0436">Ligase</keyword>
<keyword id="KW-0460">Magnesium</keyword>
<keyword id="KW-0479">Metal-binding</keyword>
<keyword id="KW-0547">Nucleotide-binding</keyword>
<keyword id="KW-0648">Protein biosynthesis</keyword>
<keyword id="KW-1185">Reference proteome</keyword>
<keyword id="KW-0694">RNA-binding</keyword>
<keyword id="KW-0820">tRNA-binding</keyword>
<accession>Q4JW05</accession>
<evidence type="ECO:0000255" key="1">
    <source>
        <dbReference type="HAMAP-Rule" id="MF_00283"/>
    </source>
</evidence>
<proteinExistence type="inferred from homology"/>
<dbReference type="EC" id="6.1.1.20" evidence="1"/>
<dbReference type="EMBL" id="CR931997">
    <property type="protein sequence ID" value="CAI37002.1"/>
    <property type="molecule type" value="Genomic_DNA"/>
</dbReference>
<dbReference type="RefSeq" id="WP_011273441.1">
    <property type="nucleotide sequence ID" value="NC_007164.1"/>
</dbReference>
<dbReference type="SMR" id="Q4JW05"/>
<dbReference type="STRING" id="306537.jk0840"/>
<dbReference type="KEGG" id="cjk:jk0840"/>
<dbReference type="PATRIC" id="fig|306537.10.peg.851"/>
<dbReference type="eggNOG" id="COG0072">
    <property type="taxonomic scope" value="Bacteria"/>
</dbReference>
<dbReference type="eggNOG" id="COG0073">
    <property type="taxonomic scope" value="Bacteria"/>
</dbReference>
<dbReference type="HOGENOM" id="CLU_016891_0_0_11"/>
<dbReference type="OrthoDB" id="9805455at2"/>
<dbReference type="Proteomes" id="UP000000545">
    <property type="component" value="Chromosome"/>
</dbReference>
<dbReference type="GO" id="GO:0009328">
    <property type="term" value="C:phenylalanine-tRNA ligase complex"/>
    <property type="evidence" value="ECO:0007669"/>
    <property type="project" value="TreeGrafter"/>
</dbReference>
<dbReference type="GO" id="GO:0005524">
    <property type="term" value="F:ATP binding"/>
    <property type="evidence" value="ECO:0007669"/>
    <property type="project" value="UniProtKB-UniRule"/>
</dbReference>
<dbReference type="GO" id="GO:0000287">
    <property type="term" value="F:magnesium ion binding"/>
    <property type="evidence" value="ECO:0007669"/>
    <property type="project" value="UniProtKB-UniRule"/>
</dbReference>
<dbReference type="GO" id="GO:0004826">
    <property type="term" value="F:phenylalanine-tRNA ligase activity"/>
    <property type="evidence" value="ECO:0007669"/>
    <property type="project" value="UniProtKB-UniRule"/>
</dbReference>
<dbReference type="GO" id="GO:0000049">
    <property type="term" value="F:tRNA binding"/>
    <property type="evidence" value="ECO:0007669"/>
    <property type="project" value="UniProtKB-KW"/>
</dbReference>
<dbReference type="GO" id="GO:0006432">
    <property type="term" value="P:phenylalanyl-tRNA aminoacylation"/>
    <property type="evidence" value="ECO:0007669"/>
    <property type="project" value="UniProtKB-UniRule"/>
</dbReference>
<dbReference type="CDD" id="cd00769">
    <property type="entry name" value="PheRS_beta_core"/>
    <property type="match status" value="1"/>
</dbReference>
<dbReference type="CDD" id="cd02796">
    <property type="entry name" value="tRNA_bind_bactPheRS"/>
    <property type="match status" value="1"/>
</dbReference>
<dbReference type="FunFam" id="3.30.70.380:FF:000001">
    <property type="entry name" value="Phenylalanine--tRNA ligase beta subunit"/>
    <property type="match status" value="1"/>
</dbReference>
<dbReference type="FunFam" id="3.30.930.10:FF:000130">
    <property type="entry name" value="Phenylalanine--tRNA ligase beta subunit"/>
    <property type="match status" value="1"/>
</dbReference>
<dbReference type="FunFam" id="3.50.40.10:FF:000001">
    <property type="entry name" value="Phenylalanine--tRNA ligase beta subunit"/>
    <property type="match status" value="1"/>
</dbReference>
<dbReference type="Gene3D" id="3.30.56.10">
    <property type="match status" value="2"/>
</dbReference>
<dbReference type="Gene3D" id="3.30.930.10">
    <property type="entry name" value="Bira Bifunctional Protein, Domain 2"/>
    <property type="match status" value="1"/>
</dbReference>
<dbReference type="Gene3D" id="3.30.70.380">
    <property type="entry name" value="Ferrodoxin-fold anticodon-binding domain"/>
    <property type="match status" value="1"/>
</dbReference>
<dbReference type="Gene3D" id="2.40.50.140">
    <property type="entry name" value="Nucleic acid-binding proteins"/>
    <property type="match status" value="1"/>
</dbReference>
<dbReference type="Gene3D" id="3.50.40.10">
    <property type="entry name" value="Phenylalanyl-trna Synthetase, Chain B, domain 3"/>
    <property type="match status" value="1"/>
</dbReference>
<dbReference type="HAMAP" id="MF_00283">
    <property type="entry name" value="Phe_tRNA_synth_beta1"/>
    <property type="match status" value="1"/>
</dbReference>
<dbReference type="InterPro" id="IPR045864">
    <property type="entry name" value="aa-tRNA-synth_II/BPL/LPL"/>
</dbReference>
<dbReference type="InterPro" id="IPR005146">
    <property type="entry name" value="B3/B4_tRNA-bd"/>
</dbReference>
<dbReference type="InterPro" id="IPR009061">
    <property type="entry name" value="DNA-bd_dom_put_sf"/>
</dbReference>
<dbReference type="InterPro" id="IPR005121">
    <property type="entry name" value="Fdx_antiC-bd"/>
</dbReference>
<dbReference type="InterPro" id="IPR036690">
    <property type="entry name" value="Fdx_antiC-bd_sf"/>
</dbReference>
<dbReference type="InterPro" id="IPR012340">
    <property type="entry name" value="NA-bd_OB-fold"/>
</dbReference>
<dbReference type="InterPro" id="IPR045060">
    <property type="entry name" value="Phe-tRNA-ligase_IIc_bsu"/>
</dbReference>
<dbReference type="InterPro" id="IPR004532">
    <property type="entry name" value="Phe-tRNA-ligase_IIc_bsu_bact"/>
</dbReference>
<dbReference type="InterPro" id="IPR020825">
    <property type="entry name" value="Phe-tRNA_synthase-like_B3/B4"/>
</dbReference>
<dbReference type="InterPro" id="IPR041616">
    <property type="entry name" value="PheRS_beta_core"/>
</dbReference>
<dbReference type="InterPro" id="IPR002547">
    <property type="entry name" value="tRNA-bd_dom"/>
</dbReference>
<dbReference type="InterPro" id="IPR033714">
    <property type="entry name" value="tRNA_bind_bactPheRS"/>
</dbReference>
<dbReference type="InterPro" id="IPR005147">
    <property type="entry name" value="tRNA_synthase_B5-dom"/>
</dbReference>
<dbReference type="NCBIfam" id="TIGR00472">
    <property type="entry name" value="pheT_bact"/>
    <property type="match status" value="1"/>
</dbReference>
<dbReference type="PANTHER" id="PTHR10947:SF0">
    <property type="entry name" value="PHENYLALANINE--TRNA LIGASE BETA SUBUNIT"/>
    <property type="match status" value="1"/>
</dbReference>
<dbReference type="PANTHER" id="PTHR10947">
    <property type="entry name" value="PHENYLALANYL-TRNA SYNTHETASE BETA CHAIN AND LEUCINE-RICH REPEAT-CONTAINING PROTEIN 47"/>
    <property type="match status" value="1"/>
</dbReference>
<dbReference type="Pfam" id="PF03483">
    <property type="entry name" value="B3_4"/>
    <property type="match status" value="1"/>
</dbReference>
<dbReference type="Pfam" id="PF03484">
    <property type="entry name" value="B5"/>
    <property type="match status" value="1"/>
</dbReference>
<dbReference type="Pfam" id="PF03147">
    <property type="entry name" value="FDX-ACB"/>
    <property type="match status" value="1"/>
</dbReference>
<dbReference type="Pfam" id="PF01588">
    <property type="entry name" value="tRNA_bind"/>
    <property type="match status" value="1"/>
</dbReference>
<dbReference type="Pfam" id="PF17759">
    <property type="entry name" value="tRNA_synthFbeta"/>
    <property type="match status" value="1"/>
</dbReference>
<dbReference type="SMART" id="SM00873">
    <property type="entry name" value="B3_4"/>
    <property type="match status" value="1"/>
</dbReference>
<dbReference type="SMART" id="SM00874">
    <property type="entry name" value="B5"/>
    <property type="match status" value="1"/>
</dbReference>
<dbReference type="SMART" id="SM00896">
    <property type="entry name" value="FDX-ACB"/>
    <property type="match status" value="1"/>
</dbReference>
<dbReference type="SUPFAM" id="SSF54991">
    <property type="entry name" value="Anticodon-binding domain of PheRS"/>
    <property type="match status" value="1"/>
</dbReference>
<dbReference type="SUPFAM" id="SSF55681">
    <property type="entry name" value="Class II aaRS and biotin synthetases"/>
    <property type="match status" value="1"/>
</dbReference>
<dbReference type="SUPFAM" id="SSF50249">
    <property type="entry name" value="Nucleic acid-binding proteins"/>
    <property type="match status" value="1"/>
</dbReference>
<dbReference type="SUPFAM" id="SSF56037">
    <property type="entry name" value="PheT/TilS domain"/>
    <property type="match status" value="1"/>
</dbReference>
<dbReference type="SUPFAM" id="SSF46955">
    <property type="entry name" value="Putative DNA-binding domain"/>
    <property type="match status" value="1"/>
</dbReference>
<dbReference type="PROSITE" id="PS51483">
    <property type="entry name" value="B5"/>
    <property type="match status" value="1"/>
</dbReference>
<dbReference type="PROSITE" id="PS51447">
    <property type="entry name" value="FDX_ACB"/>
    <property type="match status" value="1"/>
</dbReference>
<dbReference type="PROSITE" id="PS50886">
    <property type="entry name" value="TRBD"/>
    <property type="match status" value="1"/>
</dbReference>
<name>SYFB_CORJK</name>
<organism>
    <name type="scientific">Corynebacterium jeikeium (strain K411)</name>
    <dbReference type="NCBI Taxonomy" id="306537"/>
    <lineage>
        <taxon>Bacteria</taxon>
        <taxon>Bacillati</taxon>
        <taxon>Actinomycetota</taxon>
        <taxon>Actinomycetes</taxon>
        <taxon>Mycobacteriales</taxon>
        <taxon>Corynebacteriaceae</taxon>
        <taxon>Corynebacterium</taxon>
    </lineage>
</organism>
<reference key="1">
    <citation type="journal article" date="2005" name="J. Bacteriol.">
        <title>Complete genome sequence and analysis of the multiresistant nosocomial pathogen Corynebacterium jeikeium K411, a lipid-requiring bacterium of the human skin flora.</title>
        <authorList>
            <person name="Tauch A."/>
            <person name="Kaiser O."/>
            <person name="Hain T."/>
            <person name="Goesmann A."/>
            <person name="Weisshaar B."/>
            <person name="Albersmeier A."/>
            <person name="Bekel T."/>
            <person name="Bischoff N."/>
            <person name="Brune I."/>
            <person name="Chakraborty T."/>
            <person name="Kalinowski J."/>
            <person name="Meyer F."/>
            <person name="Rupp O."/>
            <person name="Schneiker S."/>
            <person name="Viehoever P."/>
            <person name="Puehler A."/>
        </authorList>
    </citation>
    <scope>NUCLEOTIDE SEQUENCE [LARGE SCALE GENOMIC DNA]</scope>
    <source>
        <strain>K411</strain>
    </source>
</reference>
<feature type="chain" id="PRO_0000232056" description="Phenylalanine--tRNA ligase beta subunit">
    <location>
        <begin position="1"/>
        <end position="852"/>
    </location>
</feature>
<feature type="domain" description="tRNA-binding" evidence="1">
    <location>
        <begin position="44"/>
        <end position="159"/>
    </location>
</feature>
<feature type="domain" description="B5" evidence="1">
    <location>
        <begin position="428"/>
        <end position="510"/>
    </location>
</feature>
<feature type="domain" description="FDX-ACB" evidence="1">
    <location>
        <begin position="758"/>
        <end position="851"/>
    </location>
</feature>
<feature type="binding site" evidence="1">
    <location>
        <position position="488"/>
    </location>
    <ligand>
        <name>Mg(2+)</name>
        <dbReference type="ChEBI" id="CHEBI:18420"/>
        <note>shared with alpha subunit</note>
    </ligand>
</feature>
<feature type="binding site" evidence="1">
    <location>
        <position position="494"/>
    </location>
    <ligand>
        <name>Mg(2+)</name>
        <dbReference type="ChEBI" id="CHEBI:18420"/>
        <note>shared with alpha subunit</note>
    </ligand>
</feature>
<feature type="binding site" evidence="1">
    <location>
        <position position="497"/>
    </location>
    <ligand>
        <name>Mg(2+)</name>
        <dbReference type="ChEBI" id="CHEBI:18420"/>
        <note>shared with alpha subunit</note>
    </ligand>
</feature>
<feature type="binding site" evidence="1">
    <location>
        <position position="498"/>
    </location>
    <ligand>
        <name>Mg(2+)</name>
        <dbReference type="ChEBI" id="CHEBI:18420"/>
        <note>shared with alpha subunit</note>
    </ligand>
</feature>
<protein>
    <recommendedName>
        <fullName evidence="1">Phenylalanine--tRNA ligase beta subunit</fullName>
        <ecNumber evidence="1">6.1.1.20</ecNumber>
    </recommendedName>
    <alternativeName>
        <fullName evidence="1">Phenylalanyl-tRNA synthetase beta subunit</fullName>
        <shortName evidence="1">PheRS</shortName>
    </alternativeName>
</protein>
<gene>
    <name evidence="1" type="primary">pheT</name>
    <name type="ordered locus">jk0840</name>
</gene>
<comment type="catalytic activity">
    <reaction evidence="1">
        <text>tRNA(Phe) + L-phenylalanine + ATP = L-phenylalanyl-tRNA(Phe) + AMP + diphosphate + H(+)</text>
        <dbReference type="Rhea" id="RHEA:19413"/>
        <dbReference type="Rhea" id="RHEA-COMP:9668"/>
        <dbReference type="Rhea" id="RHEA-COMP:9699"/>
        <dbReference type="ChEBI" id="CHEBI:15378"/>
        <dbReference type="ChEBI" id="CHEBI:30616"/>
        <dbReference type="ChEBI" id="CHEBI:33019"/>
        <dbReference type="ChEBI" id="CHEBI:58095"/>
        <dbReference type="ChEBI" id="CHEBI:78442"/>
        <dbReference type="ChEBI" id="CHEBI:78531"/>
        <dbReference type="ChEBI" id="CHEBI:456215"/>
        <dbReference type="EC" id="6.1.1.20"/>
    </reaction>
</comment>
<comment type="cofactor">
    <cofactor evidence="1">
        <name>Mg(2+)</name>
        <dbReference type="ChEBI" id="CHEBI:18420"/>
    </cofactor>
    <text evidence="1">Binds 2 magnesium ions per tetramer.</text>
</comment>
<comment type="subunit">
    <text evidence="1">Tetramer of two alpha and two beta subunits.</text>
</comment>
<comment type="subcellular location">
    <subcellularLocation>
        <location evidence="1">Cytoplasm</location>
    </subcellularLocation>
</comment>
<comment type="similarity">
    <text evidence="1">Belongs to the phenylalanyl-tRNA synthetase beta subunit family. Type 1 subfamily.</text>
</comment>